<reference evidence="9" key="1">
    <citation type="journal article" date="2001" name="Mol. Cell. Biol.">
        <title>The Caenorhabditis elegans EGL-15 signaling pathway implicates a DOS-like multisubstrate adaptor protein in fibroblast growth factor signal transduction.</title>
        <authorList>
            <person name="Schutzman J.L."/>
            <person name="Borland C.Z."/>
            <person name="Newman J.C."/>
            <person name="Robinson M.K."/>
            <person name="Kokel M."/>
            <person name="Stern M.J."/>
        </authorList>
    </citation>
    <scope>NUCLEOTIDE SEQUENCE [MRNA]</scope>
    <scope>FUNCTION</scope>
    <scope>DOMAIN</scope>
    <scope>PHOSPHORYLATION</scope>
    <scope>DISRUPTION PHENOTYPE</scope>
    <scope>MUTAGENESIS OF TYR-20; TYR-31; TYR-112; TRP-124; TYR-171; TYR-181; PRO-200; TYR-202; TYR-220; TYR-232; 239-PRO-PRO-240; TYR-293; TYR-306; TYR-340; TYR-354; TYR-365; TYR-378 AND TYR-408</scope>
    <source>
        <strain evidence="9">Bristol N2</strain>
    </source>
</reference>
<reference evidence="10" key="2">
    <citation type="journal article" date="1998" name="Science">
        <title>Genome sequence of the nematode C. elegans: a platform for investigating biology.</title>
        <authorList>
            <consortium name="The C. elegans sequencing consortium"/>
        </authorList>
    </citation>
    <scope>NUCLEOTIDE SEQUENCE [LARGE SCALE GENOMIC DNA]</scope>
    <source>
        <strain evidence="10">Bristol N2</strain>
    </source>
</reference>
<reference evidence="8" key="3">
    <citation type="journal article" date="2005" name="EMBO J.">
        <title>Identification and characterization of novel nicotinic receptor-associated proteins in Caenorhabditis elegans.</title>
        <authorList>
            <person name="Gottschalk A."/>
            <person name="Almedom R.B."/>
            <person name="Schedletzky T."/>
            <person name="Anderson S.D."/>
            <person name="Yates J.R. III"/>
            <person name="Schafer W.R."/>
        </authorList>
    </citation>
    <scope>FUNCTION</scope>
    <scope>INTERACTION WITH NICOTINIC ACETYLCHOLINE RECEPTOR</scope>
    <scope>DISRUPTION PHENOTYPE</scope>
</reference>
<reference evidence="8" key="4">
    <citation type="journal article" date="2006" name="Development">
        <title>FGF negatively regulates muscle membrane extension in Caenorhabditis elegans.</title>
        <authorList>
            <person name="Dixon S.J."/>
            <person name="Alexander M."/>
            <person name="Fernandes R."/>
            <person name="Ricker N."/>
            <person name="Roy P.J."/>
        </authorList>
    </citation>
    <scope>FUNCTION</scope>
    <scope>DISRUPTION PHENOTYPE</scope>
</reference>
<reference evidence="8" key="5">
    <citation type="journal article" date="2006" name="Genetics">
        <title>The adaptor protein soc-1/Gab1 modifies growth factor receptor output in Caenorhabditis elegans.</title>
        <authorList>
            <person name="Hopper N.A."/>
        </authorList>
    </citation>
    <scope>FUNCTION</scope>
    <scope>INTERACTION WITH SEM-5</scope>
    <scope>DISRUPTION PHENOTYPE</scope>
</reference>
<accession>G5EDJ4</accession>
<name>SOC1_CAEEL</name>
<protein>
    <recommendedName>
        <fullName evidence="7">Multisubstrate adapter protein soc-1</fullName>
    </recommendedName>
    <alternativeName>
        <fullName evidence="11">Suppressor Of Clr protein 1</fullName>
    </alternativeName>
</protein>
<sequence>MSIPDENIILEGSLKRCKKYKLFKTKWVEHYFVLHCRDRERNLFAIDEFKTSRKNDLKKRFKLEFVIRVESNLSVSDPSILCTAGGGHQEESMLNCIFGVGFRFENIVKDLYLVAKNDEEMTLWVNEICKLCKLHRQHDEGDSSHAAESSISGMSMSSQSLDMSIIEQQQYAENIPESKQYHRMHHFKSVISHNSLPSNPNYNNLPDPLESSRSETSSMYSSRRTEDDSVSYTSGPPVPPPRTRHTLNRFVKNGQVGRLHMIPASTSMGQVVKVEDAEDSSGETLKLDTPEQYPESVTSSEGFPVYERNGKTLIRRAPPPVDRSNKPKNLRGEEEAGTRYRNLSRNGVNENGNYSATFSSRTSNYQQSETSKRRNLDYFEPTQMIENSSLSTLAATSTRSPTPSDIEYISVDVDRTLAFKQMRRAAQSTD</sequence>
<evidence type="ECO:0000255" key="1">
    <source>
        <dbReference type="PROSITE-ProRule" id="PRU00145"/>
    </source>
</evidence>
<evidence type="ECO:0000256" key="2">
    <source>
        <dbReference type="SAM" id="MobiDB-lite"/>
    </source>
</evidence>
<evidence type="ECO:0000269" key="3">
    <source>
    </source>
</evidence>
<evidence type="ECO:0000269" key="4">
    <source>
    </source>
</evidence>
<evidence type="ECO:0000269" key="5">
    <source>
    </source>
</evidence>
<evidence type="ECO:0000269" key="6">
    <source>
    </source>
</evidence>
<evidence type="ECO:0000303" key="7">
    <source>
    </source>
</evidence>
<evidence type="ECO:0000305" key="8"/>
<evidence type="ECO:0000312" key="9">
    <source>
        <dbReference type="EMBL" id="AAL15971.1"/>
    </source>
</evidence>
<evidence type="ECO:0000312" key="10">
    <source>
        <dbReference type="Proteomes" id="UP000001940"/>
    </source>
</evidence>
<evidence type="ECO:0000312" key="11">
    <source>
        <dbReference type="WormBase" id="F41F3.2"/>
    </source>
</evidence>
<organism evidence="10">
    <name type="scientific">Caenorhabditis elegans</name>
    <dbReference type="NCBI Taxonomy" id="6239"/>
    <lineage>
        <taxon>Eukaryota</taxon>
        <taxon>Metazoa</taxon>
        <taxon>Ecdysozoa</taxon>
        <taxon>Nematoda</taxon>
        <taxon>Chromadorea</taxon>
        <taxon>Rhabditida</taxon>
        <taxon>Rhabditina</taxon>
        <taxon>Rhabditomorpha</taxon>
        <taxon>Rhabditoidea</taxon>
        <taxon>Rhabditidae</taxon>
        <taxon>Peloderinae</taxon>
        <taxon>Caenorhabditis</taxon>
    </lineage>
</organism>
<gene>
    <name evidence="11" type="primary">soc-1</name>
    <name evidence="11" type="ORF">F41F3.2</name>
</gene>
<dbReference type="EMBL" id="AF419335">
    <property type="protein sequence ID" value="AAL15971.1"/>
    <property type="molecule type" value="mRNA"/>
</dbReference>
<dbReference type="EMBL" id="BX284605">
    <property type="protein sequence ID" value="CCD71016.1"/>
    <property type="molecule type" value="Genomic_DNA"/>
</dbReference>
<dbReference type="PIR" id="T29729">
    <property type="entry name" value="T29729"/>
</dbReference>
<dbReference type="RefSeq" id="NP_504250.2">
    <property type="nucleotide sequence ID" value="NM_071849.4"/>
</dbReference>
<dbReference type="FunCoup" id="G5EDJ4">
    <property type="interactions" value="54"/>
</dbReference>
<dbReference type="IntAct" id="G5EDJ4">
    <property type="interactions" value="1"/>
</dbReference>
<dbReference type="MINT" id="G5EDJ4"/>
<dbReference type="STRING" id="6239.F41F3.2.1"/>
<dbReference type="PaxDb" id="6239-F41F3.2"/>
<dbReference type="EnsemblMetazoa" id="F41F3.2.1">
    <property type="protein sequence ID" value="F41F3.2.1"/>
    <property type="gene ID" value="WBGene00004928"/>
</dbReference>
<dbReference type="GeneID" id="178855"/>
<dbReference type="KEGG" id="cel:CELE_F41F3.2"/>
<dbReference type="AGR" id="WB:WBGene00004928"/>
<dbReference type="CTD" id="178855"/>
<dbReference type="WormBase" id="F41F3.2">
    <property type="protein sequence ID" value="CE30786"/>
    <property type="gene ID" value="WBGene00004928"/>
    <property type="gene designation" value="soc-1"/>
</dbReference>
<dbReference type="eggNOG" id="ENOG502TGXK">
    <property type="taxonomic scope" value="Eukaryota"/>
</dbReference>
<dbReference type="GeneTree" id="ENSGT00940000175323"/>
<dbReference type="HOGENOM" id="CLU_639732_0_0_1"/>
<dbReference type="InParanoid" id="G5EDJ4"/>
<dbReference type="OMA" id="WVNEICK"/>
<dbReference type="OrthoDB" id="67516at2759"/>
<dbReference type="SignaLink" id="G5EDJ4"/>
<dbReference type="PRO" id="PR:G5EDJ4"/>
<dbReference type="Proteomes" id="UP000001940">
    <property type="component" value="Chromosome V"/>
</dbReference>
<dbReference type="Bgee" id="WBGene00004928">
    <property type="expression patterns" value="Expressed in germ line (C elegans) and 4 other cell types or tissues"/>
</dbReference>
<dbReference type="GO" id="GO:0040024">
    <property type="term" value="P:dauer larval development"/>
    <property type="evidence" value="ECO:0000316"/>
    <property type="project" value="WormBase"/>
</dbReference>
<dbReference type="Gene3D" id="2.30.29.30">
    <property type="entry name" value="Pleckstrin-homology domain (PH domain)/Phosphotyrosine-binding domain (PTB)"/>
    <property type="match status" value="1"/>
</dbReference>
<dbReference type="InterPro" id="IPR046355">
    <property type="entry name" value="Gab1-4-like"/>
</dbReference>
<dbReference type="InterPro" id="IPR011993">
    <property type="entry name" value="PH-like_dom_sf"/>
</dbReference>
<dbReference type="InterPro" id="IPR001849">
    <property type="entry name" value="PH_domain"/>
</dbReference>
<dbReference type="PANTHER" id="PTHR45960">
    <property type="entry name" value="GRB2-ASSOCIATED-BINDING PROTEIN"/>
    <property type="match status" value="1"/>
</dbReference>
<dbReference type="PANTHER" id="PTHR45960:SF2">
    <property type="entry name" value="PROTEIN DAUGHTER OF SEVENLESS"/>
    <property type="match status" value="1"/>
</dbReference>
<dbReference type="Pfam" id="PF00169">
    <property type="entry name" value="PH"/>
    <property type="match status" value="1"/>
</dbReference>
<dbReference type="SMART" id="SM00233">
    <property type="entry name" value="PH"/>
    <property type="match status" value="1"/>
</dbReference>
<dbReference type="SUPFAM" id="SSF50729">
    <property type="entry name" value="PH domain-like"/>
    <property type="match status" value="1"/>
</dbReference>
<dbReference type="PROSITE" id="PS50003">
    <property type="entry name" value="PH_DOMAIN"/>
    <property type="match status" value="1"/>
</dbReference>
<proteinExistence type="evidence at protein level"/>
<keyword id="KW-0597">Phosphoprotein</keyword>
<keyword id="KW-1185">Reference proteome</keyword>
<comment type="function">
    <text evidence="3 4 5 6">Adapter protein which modulates signaling mediated by several receptor tyrosine kinases. Plays a role in fluid homeostasis, probably downstream of receptor egl-15 and upstream of let-60/Ras (PubMed:11689700). Involved in nicotinic acetylcholine receptor (nAChR)-mediated sensitivity to nicotine and levamisole and gamma-aminobutyric acid (GABA)receptor-mediated sensitivity to muscimol (PubMed:15990870). Regulates synaptic levels of nAchR receptor subunit lev-1 and unc-38, and GABA receptor subunit unc-49 in the nerve cord, probably downstream of egl-15 (PubMed:15990870). Regulates motility (PubMed:15990870). During the formation of neuromuscular junctions at the larval stage, down-regulates membrane protrusion from body wall muscles, probably downstream of egl-15 (PubMed:16495308). Promotes vulva induction and down-regulates fertility, probably downstream of receptor let-23 (PubMed:16547100). Down-regulates daf-2-mediated repression of dauer formation and positively regulates daf-2-mediated aging (PubMed:16547100). May be involved in the recruitment of phosphatase ptp-2 to egl-15 (PubMed:11689700).</text>
</comment>
<comment type="subunit">
    <text evidence="4 6">Interacts (via C-terminus) with sem-5 (probably via SH3 domain 2) (PubMed:16547100). Interacts with nicotinic acetylcholine receptor (PubMed:15990870).</text>
</comment>
<comment type="domain">
    <text evidence="3">The PH domain is required for fluid homeostasis.</text>
</comment>
<comment type="domain">
    <text evidence="3">The C-terminal domain is required for fluid homeostasis.</text>
</comment>
<comment type="PTM">
    <text evidence="3">May be phosphorylated.</text>
</comment>
<comment type="disruption phenotype">
    <text evidence="3 4 5 6">Causes a decrease in synaptic levels of lev-1, unc-38 and unc-49, a moderate resistance to paralysis induced by nicotine and levamisole (PubMed:15990870) and a mild increase in uncoordinated movements. In addition, forms ectopic muscle membrane extension during larval stage (PubMed:16495308). Rescues fluid accumulation in clr-1 e1745ts mutant (PubMed:11689700). Partially suppresses multi-vulva formation and partially restores fertility in let-60 1046gf mutant (PubMed:16547100). Prevents constitutive dauer formation in daf-2 m577 mutant (PubMed:16547100).</text>
</comment>
<feature type="chain" id="PRO_0000435953" description="Multisubstrate adapter protein soc-1" evidence="8">
    <location>
        <begin position="1"/>
        <end position="430"/>
    </location>
</feature>
<feature type="domain" description="PH" evidence="1">
    <location>
        <begin position="7"/>
        <end position="133"/>
    </location>
</feature>
<feature type="region of interest" description="Disordered" evidence="2">
    <location>
        <begin position="192"/>
        <end position="246"/>
    </location>
</feature>
<feature type="region of interest" description="Disordered" evidence="2">
    <location>
        <begin position="275"/>
        <end position="303"/>
    </location>
</feature>
<feature type="region of interest" description="Disordered" evidence="2">
    <location>
        <begin position="315"/>
        <end position="377"/>
    </location>
</feature>
<feature type="compositionally biased region" description="Low complexity" evidence="2">
    <location>
        <begin position="192"/>
        <end position="222"/>
    </location>
</feature>
<feature type="compositionally biased region" description="Polar residues" evidence="2">
    <location>
        <begin position="341"/>
        <end position="369"/>
    </location>
</feature>
<feature type="mutagenesis site" description="Likely abolishes phosphorylation. Almost complete rescue of fluid accumulation in clr-1 e1745ts mutant; when associated with F-31; F-112; F-171; F-181; F-220; F-232; F-293; F-306; F-354; F-365 and F-378. No rescue of fluid accumulation in clr-1 e1745ts mutant; when associated with F-31; F-112; F-171; F-181; F-220; F-232; F-293; F-306; F-354; F-365; F-378 and F-408." evidence="3">
    <original>Y</original>
    <variation>F</variation>
    <location>
        <position position="20"/>
    </location>
</feature>
<feature type="mutagenesis site" description="Likely abolishes phosphorylation. Almost complete rescue of fluid accumulation in clr-1 e1745ts mutant; when associated with F-20; F-112; F-171; F-181; F-220; F-232; F-293; F-306; F-354; F-365 and F-378. No rescue of fluid accumulation in clr-1 e1745ts mutant; when associated with F-20; F-112; F-171; F-181; F-220; F-232; F-293; F-306; F-354; F-365; F-378 and F-408." evidence="3">
    <original>Y</original>
    <variation>F</variation>
    <location>
        <position position="31"/>
    </location>
</feature>
<feature type="mutagenesis site" description="Likely abolishes phosphorylation. Almost complete rescue of fluid accumulation in clr-1 e1745ts mutant; when associated with F-20; F-31; F-171; F-181; F-220; F-232; F-293; F-306; F-354; F-365 and F-378. No rescue of fluid accumulation in clr-1 e1745ts mutant; when associated with F-20; F-31; F-171; F-181; F-220; F-232; F-293; F-306; F-354; F-365; F-378 and F-408." evidence="3">
    <original>Y</original>
    <variation>F</variation>
    <location>
        <position position="112"/>
    </location>
</feature>
<feature type="mutagenesis site" description="No rescue of fluid accumulation in clr-1 e1745ts mutant." evidence="3">
    <original>W</original>
    <variation>A</variation>
    <location>
        <position position="124"/>
    </location>
</feature>
<feature type="mutagenesis site" description="Likely abolishes phosphorylation. Almost complete rescue of fluid accumulation in clr-1 e1745ts mutant; when associated with F-20; F-31; F-112; F-181; F-220; F-232; F-293; F-306; F-354; F-365 and F-378. No rescue of fluid accumulation in clr-1 e1745ts mutant; when associated with F-20; F-31; F-112; F-181; F-220; F-232; F-293; F-306; F-354; F-365; F-378 and F-408." evidence="3">
    <original>Y</original>
    <variation>F</variation>
    <location>
        <position position="171"/>
    </location>
</feature>
<feature type="mutagenesis site" description="Likely abolishes phosphorylation. Almost complete rescue of fluid accumulation in clr-1 e1745ts mutant; when associated with F-20; F-31; F-112; F-171; F-220; F-232; F-293; F-306; F-354; F-365 and F-378. No rescue of fluid accumulation in clr-1 e1745ts mutant; when associated with F-20; F-31; F-112; F-171; F-220; F-232; F-293; F-306; F-354; F-365; F-378 and F-408." evidence="3">
    <original>Y</original>
    <variation>F</variation>
    <location>
        <position position="181"/>
    </location>
</feature>
<feature type="mutagenesis site" description="Rescues fluid accumulation in clr-1 e1745ts mutant; when associated with A-239 and A-240." evidence="3">
    <original>P</original>
    <variation>A</variation>
    <location>
        <position position="200"/>
    </location>
</feature>
<feature type="mutagenesis site" description="Likely abolishes phosphorylation. Rescues fluid accumulation in clr-1 e1745ts mutant; when associated with F-340." evidence="3">
    <original>Y</original>
    <variation>F</variation>
    <location>
        <position position="202"/>
    </location>
</feature>
<feature type="mutagenesis site" description="Likely abolishes phosphorylation. Almost complete rescue of fluid accumulation in clr-1 e1745ts mutant; when associated with F-20; F-31; F-112; F-171; F-181; F-232; F-293; F-306; F-354; F-365 and F-378. No rescue of fluid accumulation in clr-1 e1745ts mutant; when associated with F-20; F-31; F-112; F-171; F-181; F-232; F-293; F-306; F-354; F-365; F-378 and F-408." evidence="3">
    <original>Y</original>
    <variation>F</variation>
    <location>
        <position position="220"/>
    </location>
</feature>
<feature type="mutagenesis site" description="Likely abolishes phosphorylation. Almost complete rescue of fluid accumulation in clr-1 e1745ts mutant; when associated with F-20; F-31; F-112; F-171; F-181; F-220; F-293; F-306; F-354; F-365 and F-378. No rescue of fluid accumulation in clr-1 e1745ts mutant; when associated with F-20; F-31; F-112; F-171; F-181; F-220; F-293; F-306; F-354; F-365; F-378 and F-408." evidence="3">
    <original>Y</original>
    <variation>F</variation>
    <location>
        <position position="232"/>
    </location>
</feature>
<feature type="mutagenesis site" description="Rescues fluid accumulation in clr-1 e1745ts mutant; when associated with A-200." evidence="3">
    <original>PP</original>
    <variation>AA</variation>
    <location>
        <begin position="239"/>
        <end position="240"/>
    </location>
</feature>
<feature type="mutagenesis site" description="Likely abolishes phosphorylation. Almost complete rescue of fluid accumulation in clr-1 e1745ts mutant; when associated with F-20; F-31; F-112; F-171; F-181; F-220; F-232; F-306; F-354; F-365 and F-378. No rescue of fluid accumulation in clr-1 e1745ts mutant; when associated with F-20; F-31; F-112; F-171; F-181; F-220; F-232; F-306; F-354; F-365; F-378 and F-408." evidence="3">
    <original>Y</original>
    <variation>F</variation>
    <location>
        <position position="293"/>
    </location>
</feature>
<feature type="mutagenesis site" description="Likely abolishes phosphorylation. Almost complete rescue of fluid accumulation in clr-1 e1745ts mutant; when associated with F-20; F-31; F-112; F-171; F-181; F-220; F-232; F-293; F-354; F-365 and F-378. No rescue of fluid accumulation in clr-1 e1745ts mutant; when associated with F-20; F-31; F-112; F-171; F-181; F-220; F-232; F-293; F-354; F-365; F-378 and F-408." evidence="3">
    <original>Y</original>
    <variation>F</variation>
    <location>
        <position position="306"/>
    </location>
</feature>
<feature type="mutagenesis site" description="Likely abolishes phosphorylation. Rescues fluid accumulation in clr-1 e1745ts mutant; when associated with F-202." evidence="3">
    <original>Y</original>
    <variation>F</variation>
    <location>
        <position position="340"/>
    </location>
</feature>
<feature type="mutagenesis site" description="Likely abolishes phosphorylation. Almost complete rescue of fluid accumulation in clr-1 e1745ts mutant; when associated with F-20; F-31; F-112; F-171; F-181; F-220; F-232; F-293; F-306; F-365 and F-378. No rescue of fluid accumulation in clr-1 e1745ts mutant; when associated with F-20; F-31; F-112; F-171; F-181; F-220; F-232; F-293; F-306; F-365; F-378 and F-408." evidence="3">
    <original>Y</original>
    <variation>F</variation>
    <location>
        <position position="354"/>
    </location>
</feature>
<feature type="mutagenesis site" description="Likely abolishes phosphorylation. Almost complete rescue of fluid accumulation in clr-1 e1745ts mutant; when associated with F-20; F-31; F-112; F-171; F-181; F-220; F-232; F-293; F-306; F-354 and F-378. No rescue of fluid accumulation in clr-1 e1745ts mutant; when associated with F-20; F-31; F-112; F-171; F-181; F-220; F-232; F-293; F-306; F-354; F-378 and F-408." evidence="3">
    <original>Y</original>
    <variation>F</variation>
    <location>
        <position position="365"/>
    </location>
</feature>
<feature type="mutagenesis site" description="Likely abolishes phosphorylation. Almost complete rescue of fluid accumulation in clr-1 e1745ts mutant; when associated with F-20; F-31; F-112; F-171; F-181; F-220; F-232; F-293; F-306; F-354 and F-365. No rescue of fluid accumulation in clr-1 e1745ts mutant; when associated with F-20; F-31; F-112; F-171; F-181; F-220; F-232; F-293; F-306; F-354; F-365 and F-408." evidence="3">
    <original>Y</original>
    <variation>F</variation>
    <location>
        <position position="378"/>
    </location>
</feature>
<feature type="mutagenesis site" description="Likely abolishes phosphorylation. Weak rescue of fluid accumulation in clr-1 e1745ts mutant. No rescue of fluid accumulation in clr-1 e1745ts mutant; when associated with F-20; F-31; F-112; F-171; F-181; F-220; F-232; F-293; F-306; F-354; F-365 and F-378." evidence="3">
    <original>Y</original>
    <variation>F</variation>
    <location>
        <position position="408"/>
    </location>
</feature>